<name>RH21_ORYSJ</name>
<protein>
    <recommendedName>
        <fullName>DEAD-box ATP-dependent RNA helicase 21</fullName>
        <ecNumber>3.6.4.13</ecNumber>
    </recommendedName>
</protein>
<accession>Q53RK8</accession>
<accession>B7EG14</accession>
<proteinExistence type="evidence at transcript level"/>
<evidence type="ECO:0000250" key="1"/>
<evidence type="ECO:0000255" key="2"/>
<evidence type="ECO:0000255" key="3">
    <source>
        <dbReference type="PROSITE-ProRule" id="PRU00541"/>
    </source>
</evidence>
<evidence type="ECO:0000255" key="4">
    <source>
        <dbReference type="PROSITE-ProRule" id="PRU00542"/>
    </source>
</evidence>
<evidence type="ECO:0000256" key="5">
    <source>
        <dbReference type="SAM" id="MobiDB-lite"/>
    </source>
</evidence>
<evidence type="ECO:0000305" key="6"/>
<organism>
    <name type="scientific">Oryza sativa subsp. japonica</name>
    <name type="common">Rice</name>
    <dbReference type="NCBI Taxonomy" id="39947"/>
    <lineage>
        <taxon>Eukaryota</taxon>
        <taxon>Viridiplantae</taxon>
        <taxon>Streptophyta</taxon>
        <taxon>Embryophyta</taxon>
        <taxon>Tracheophyta</taxon>
        <taxon>Spermatophyta</taxon>
        <taxon>Magnoliopsida</taxon>
        <taxon>Liliopsida</taxon>
        <taxon>Poales</taxon>
        <taxon>Poaceae</taxon>
        <taxon>BOP clade</taxon>
        <taxon>Oryzoideae</taxon>
        <taxon>Oryzeae</taxon>
        <taxon>Oryzinae</taxon>
        <taxon>Oryza</taxon>
        <taxon>Oryza sativa</taxon>
    </lineage>
</organism>
<comment type="function">
    <text evidence="1">ATP-dependent RNA helicase involved in mRNA splicing. May destabilize the U1/5'-splice site duplex to permit an effective competition for the 5'-splice site by the U6 snRNA, resulting in the switch between U1 and U6 at the 5'-splice site. May also act to unwind the U4/U6 base-pairing interaction in the U4/U6/U5 snRNP, facilitating the first covalent step of splicing (By similarity).</text>
</comment>
<comment type="catalytic activity">
    <reaction>
        <text>ATP + H2O = ADP + phosphate + H(+)</text>
        <dbReference type="Rhea" id="RHEA:13065"/>
        <dbReference type="ChEBI" id="CHEBI:15377"/>
        <dbReference type="ChEBI" id="CHEBI:15378"/>
        <dbReference type="ChEBI" id="CHEBI:30616"/>
        <dbReference type="ChEBI" id="CHEBI:43474"/>
        <dbReference type="ChEBI" id="CHEBI:456216"/>
        <dbReference type="EC" id="3.6.4.13"/>
    </reaction>
</comment>
<comment type="subcellular location">
    <subcellularLocation>
        <location evidence="1">Cytoplasm</location>
    </subcellularLocation>
    <subcellularLocation>
        <location evidence="1">Nucleus</location>
    </subcellularLocation>
</comment>
<comment type="domain">
    <text>The Q motif is unique to and characteristic of the DEAD box family of RNA helicases and controls ATP binding and hydrolysis.</text>
</comment>
<comment type="similarity">
    <text evidence="6">Belongs to the DEAD box helicase family. DDX23/PRP28 subfamily.</text>
</comment>
<gene>
    <name type="ordered locus">Os03g0708600</name>
    <name type="ordered locus">LOC_Os03g50090</name>
    <name type="ORF">OsJ_12293</name>
</gene>
<sequence>MKRAADGMEKPKFLTREEREKLALERRQAAVTDQRRSALDLLQSLPRPPPPPPPPLSNPPRDSSSSHHRDSSDRDRDRDRDRDRDRDRDRDRERRRDDDSRRDRDRDRDRDRGDSSRRDRDRERGDRDRDRDRERGDRDRERGDREKDRLEKMAEREREKELDAIKEQYLGSKKPKKRVIKPSEKFRFSFDWENTEDTSRDMNSLYQSPHEARLLYGRGFLAGIDRREQKKVAAAHEKETRAEQRRKAGLDDRPEDDAVDKKEADAAAKYDAFDMRVDRHWTQKSLDEMTERDWRIFREDFNISYKGSKVPRPMRKWSESKLGTELLRAVEKAGYKEPSPIQMASIPLGLQQRDVIGIAETGSGKTAAFVLPMLSYITRLPPISEENEAEGPYAVVMAPTRELAQQIEEETVKFATYLGIKVVSIVGGQSIEEQGFKIRQGCEVVIATPGRLLDCLERRYAVLNQCNYVVLDEADRMIDMGFEPQVVGVLDAMPSSNLKPENEDEELDAKTIYRTTYMFSATMPPAVERLARKYLRNPVVVTIGTAGKATDLITQNVIMTKESEKMSRLQKILTDLGDKPAIVFCNTKKSADARAKDLDKAGFRVTTLHGGKSQEQRETSLDGFRNRRFTVLVATDVAGRGIDIPDVAHVINYEMPSSIDTYTHRIGRTGRAGKKGLATSFLTLENTDIFFDLKQMLIQSNSPVPPELARHEASKFKPGSVPDRPPRRNDTVYATH</sequence>
<keyword id="KW-0067">ATP-binding</keyword>
<keyword id="KW-0175">Coiled coil</keyword>
<keyword id="KW-0963">Cytoplasm</keyword>
<keyword id="KW-0347">Helicase</keyword>
<keyword id="KW-0378">Hydrolase</keyword>
<keyword id="KW-0507">mRNA processing</keyword>
<keyword id="KW-0508">mRNA splicing</keyword>
<keyword id="KW-0547">Nucleotide-binding</keyword>
<keyword id="KW-0539">Nucleus</keyword>
<keyword id="KW-1185">Reference proteome</keyword>
<keyword id="KW-0694">RNA-binding</keyword>
<reference key="1">
    <citation type="journal article" date="2005" name="Genome Res.">
        <title>Sequence, annotation, and analysis of synteny between rice chromosome 3 and diverged grass species.</title>
        <authorList>
            <consortium name="The rice chromosome 3 sequencing consortium"/>
            <person name="Buell C.R."/>
            <person name="Yuan Q."/>
            <person name="Ouyang S."/>
            <person name="Liu J."/>
            <person name="Zhu W."/>
            <person name="Wang A."/>
            <person name="Maiti R."/>
            <person name="Haas B."/>
            <person name="Wortman J."/>
            <person name="Pertea M."/>
            <person name="Jones K.M."/>
            <person name="Kim M."/>
            <person name="Overton L."/>
            <person name="Tsitrin T."/>
            <person name="Fadrosh D."/>
            <person name="Bera J."/>
            <person name="Weaver B."/>
            <person name="Jin S."/>
            <person name="Johri S."/>
            <person name="Reardon M."/>
            <person name="Webb K."/>
            <person name="Hill J."/>
            <person name="Moffat K."/>
            <person name="Tallon L."/>
            <person name="Van Aken S."/>
            <person name="Lewis M."/>
            <person name="Utterback T."/>
            <person name="Feldblyum T."/>
            <person name="Zismann V."/>
            <person name="Iobst S."/>
            <person name="Hsiao J."/>
            <person name="de Vazeille A.R."/>
            <person name="Salzberg S.L."/>
            <person name="White O."/>
            <person name="Fraser C.M."/>
            <person name="Yu Y."/>
            <person name="Kim H."/>
            <person name="Rambo T."/>
            <person name="Currie J."/>
            <person name="Collura K."/>
            <person name="Kernodle-Thompson S."/>
            <person name="Wei F."/>
            <person name="Kudrna K."/>
            <person name="Ammiraju J.S.S."/>
            <person name="Luo M."/>
            <person name="Goicoechea J.L."/>
            <person name="Wing R.A."/>
            <person name="Henry D."/>
            <person name="Oates R."/>
            <person name="Palmer M."/>
            <person name="Pries G."/>
            <person name="Saski C."/>
            <person name="Simmons J."/>
            <person name="Soderlund C."/>
            <person name="Nelson W."/>
            <person name="de la Bastide M."/>
            <person name="Spiegel L."/>
            <person name="Nascimento L."/>
            <person name="Huang E."/>
            <person name="Preston R."/>
            <person name="Zutavern T."/>
            <person name="Palmer L."/>
            <person name="O'Shaughnessy A."/>
            <person name="Dike S."/>
            <person name="McCombie W.R."/>
            <person name="Minx P."/>
            <person name="Cordum H."/>
            <person name="Wilson R."/>
            <person name="Jin W."/>
            <person name="Lee H.R."/>
            <person name="Jiang J."/>
            <person name="Jackson S."/>
        </authorList>
    </citation>
    <scope>NUCLEOTIDE SEQUENCE [LARGE SCALE GENOMIC DNA]</scope>
    <source>
        <strain>cv. Nipponbare</strain>
    </source>
</reference>
<reference key="2">
    <citation type="journal article" date="2005" name="Nature">
        <title>The map-based sequence of the rice genome.</title>
        <authorList>
            <consortium name="International rice genome sequencing project (IRGSP)"/>
        </authorList>
    </citation>
    <scope>NUCLEOTIDE SEQUENCE [LARGE SCALE GENOMIC DNA]</scope>
    <source>
        <strain>cv. Nipponbare</strain>
    </source>
</reference>
<reference key="3">
    <citation type="journal article" date="2008" name="Nucleic Acids Res.">
        <title>The rice annotation project database (RAP-DB): 2008 update.</title>
        <authorList>
            <consortium name="The rice annotation project (RAP)"/>
        </authorList>
    </citation>
    <scope>GENOME REANNOTATION</scope>
    <source>
        <strain>cv. Nipponbare</strain>
    </source>
</reference>
<reference key="4">
    <citation type="journal article" date="2013" name="Rice">
        <title>Improvement of the Oryza sativa Nipponbare reference genome using next generation sequence and optical map data.</title>
        <authorList>
            <person name="Kawahara Y."/>
            <person name="de la Bastide M."/>
            <person name="Hamilton J.P."/>
            <person name="Kanamori H."/>
            <person name="McCombie W.R."/>
            <person name="Ouyang S."/>
            <person name="Schwartz D.C."/>
            <person name="Tanaka T."/>
            <person name="Wu J."/>
            <person name="Zhou S."/>
            <person name="Childs K.L."/>
            <person name="Davidson R.M."/>
            <person name="Lin H."/>
            <person name="Quesada-Ocampo L."/>
            <person name="Vaillancourt B."/>
            <person name="Sakai H."/>
            <person name="Lee S.S."/>
            <person name="Kim J."/>
            <person name="Numa H."/>
            <person name="Itoh T."/>
            <person name="Buell C.R."/>
            <person name="Matsumoto T."/>
        </authorList>
    </citation>
    <scope>GENOME REANNOTATION</scope>
    <source>
        <strain>cv. Nipponbare</strain>
    </source>
</reference>
<reference key="5">
    <citation type="journal article" date="2005" name="PLoS Biol.">
        <title>The genomes of Oryza sativa: a history of duplications.</title>
        <authorList>
            <person name="Yu J."/>
            <person name="Wang J."/>
            <person name="Lin W."/>
            <person name="Li S."/>
            <person name="Li H."/>
            <person name="Zhou J."/>
            <person name="Ni P."/>
            <person name="Dong W."/>
            <person name="Hu S."/>
            <person name="Zeng C."/>
            <person name="Zhang J."/>
            <person name="Zhang Y."/>
            <person name="Li R."/>
            <person name="Xu Z."/>
            <person name="Li S."/>
            <person name="Li X."/>
            <person name="Zheng H."/>
            <person name="Cong L."/>
            <person name="Lin L."/>
            <person name="Yin J."/>
            <person name="Geng J."/>
            <person name="Li G."/>
            <person name="Shi J."/>
            <person name="Liu J."/>
            <person name="Lv H."/>
            <person name="Li J."/>
            <person name="Wang J."/>
            <person name="Deng Y."/>
            <person name="Ran L."/>
            <person name="Shi X."/>
            <person name="Wang X."/>
            <person name="Wu Q."/>
            <person name="Li C."/>
            <person name="Ren X."/>
            <person name="Wang J."/>
            <person name="Wang X."/>
            <person name="Li D."/>
            <person name="Liu D."/>
            <person name="Zhang X."/>
            <person name="Ji Z."/>
            <person name="Zhao W."/>
            <person name="Sun Y."/>
            <person name="Zhang Z."/>
            <person name="Bao J."/>
            <person name="Han Y."/>
            <person name="Dong L."/>
            <person name="Ji J."/>
            <person name="Chen P."/>
            <person name="Wu S."/>
            <person name="Liu J."/>
            <person name="Xiao Y."/>
            <person name="Bu D."/>
            <person name="Tan J."/>
            <person name="Yang L."/>
            <person name="Ye C."/>
            <person name="Zhang J."/>
            <person name="Xu J."/>
            <person name="Zhou Y."/>
            <person name="Yu Y."/>
            <person name="Zhang B."/>
            <person name="Zhuang S."/>
            <person name="Wei H."/>
            <person name="Liu B."/>
            <person name="Lei M."/>
            <person name="Yu H."/>
            <person name="Li Y."/>
            <person name="Xu H."/>
            <person name="Wei S."/>
            <person name="He X."/>
            <person name="Fang L."/>
            <person name="Zhang Z."/>
            <person name="Zhang Y."/>
            <person name="Huang X."/>
            <person name="Su Z."/>
            <person name="Tong W."/>
            <person name="Li J."/>
            <person name="Tong Z."/>
            <person name="Li S."/>
            <person name="Ye J."/>
            <person name="Wang L."/>
            <person name="Fang L."/>
            <person name="Lei T."/>
            <person name="Chen C.-S."/>
            <person name="Chen H.-C."/>
            <person name="Xu Z."/>
            <person name="Li H."/>
            <person name="Huang H."/>
            <person name="Zhang F."/>
            <person name="Xu H."/>
            <person name="Li N."/>
            <person name="Zhao C."/>
            <person name="Li S."/>
            <person name="Dong L."/>
            <person name="Huang Y."/>
            <person name="Li L."/>
            <person name="Xi Y."/>
            <person name="Qi Q."/>
            <person name="Li W."/>
            <person name="Zhang B."/>
            <person name="Hu W."/>
            <person name="Zhang Y."/>
            <person name="Tian X."/>
            <person name="Jiao Y."/>
            <person name="Liang X."/>
            <person name="Jin J."/>
            <person name="Gao L."/>
            <person name="Zheng W."/>
            <person name="Hao B."/>
            <person name="Liu S.-M."/>
            <person name="Wang W."/>
            <person name="Yuan L."/>
            <person name="Cao M."/>
            <person name="McDermott J."/>
            <person name="Samudrala R."/>
            <person name="Wang J."/>
            <person name="Wong G.K.-S."/>
            <person name="Yang H."/>
        </authorList>
    </citation>
    <scope>NUCLEOTIDE SEQUENCE [LARGE SCALE GENOMIC DNA]</scope>
    <source>
        <strain>cv. Nipponbare</strain>
    </source>
</reference>
<reference key="6">
    <citation type="journal article" date="2003" name="Science">
        <title>Collection, mapping, and annotation of over 28,000 cDNA clones from japonica rice.</title>
        <authorList>
            <consortium name="The rice full-length cDNA consortium"/>
        </authorList>
    </citation>
    <scope>NUCLEOTIDE SEQUENCE [LARGE SCALE MRNA]</scope>
    <source>
        <strain>cv. Nipponbare</strain>
    </source>
</reference>
<feature type="chain" id="PRO_0000282477" description="DEAD-box ATP-dependent RNA helicase 21">
    <location>
        <begin position="1"/>
        <end position="736"/>
    </location>
</feature>
<feature type="domain" description="Helicase ATP-binding" evidence="3">
    <location>
        <begin position="346"/>
        <end position="541"/>
    </location>
</feature>
<feature type="domain" description="Helicase C-terminal" evidence="4">
    <location>
        <begin position="568"/>
        <end position="712"/>
    </location>
</feature>
<feature type="region of interest" description="Disordered" evidence="5">
    <location>
        <begin position="25"/>
        <end position="178"/>
    </location>
</feature>
<feature type="region of interest" description="Disordered" evidence="5">
    <location>
        <begin position="231"/>
        <end position="263"/>
    </location>
</feature>
<feature type="region of interest" description="Disordered" evidence="5">
    <location>
        <begin position="704"/>
        <end position="736"/>
    </location>
</feature>
<feature type="coiled-coil region" evidence="2">
    <location>
        <begin position="14"/>
        <end position="38"/>
    </location>
</feature>
<feature type="coiled-coil region" evidence="2">
    <location>
        <begin position="137"/>
        <end position="167"/>
    </location>
</feature>
<feature type="short sequence motif" description="Q motif">
    <location>
        <begin position="315"/>
        <end position="343"/>
    </location>
</feature>
<feature type="short sequence motif" description="DEAD box">
    <location>
        <begin position="472"/>
        <end position="475"/>
    </location>
</feature>
<feature type="compositionally biased region" description="Basic and acidic residues" evidence="5">
    <location>
        <begin position="25"/>
        <end position="38"/>
    </location>
</feature>
<feature type="compositionally biased region" description="Pro residues" evidence="5">
    <location>
        <begin position="46"/>
        <end position="58"/>
    </location>
</feature>
<feature type="compositionally biased region" description="Basic and acidic residues" evidence="5">
    <location>
        <begin position="64"/>
        <end position="166"/>
    </location>
</feature>
<feature type="compositionally biased region" description="Basic and acidic residues" evidence="5">
    <location>
        <begin position="231"/>
        <end position="252"/>
    </location>
</feature>
<feature type="binding site" evidence="3">
    <location>
        <begin position="359"/>
        <end position="366"/>
    </location>
    <ligand>
        <name>ATP</name>
        <dbReference type="ChEBI" id="CHEBI:30616"/>
    </ligand>
</feature>
<dbReference type="EC" id="3.6.4.13"/>
<dbReference type="EMBL" id="AC087181">
    <property type="protein sequence ID" value="AAX95674.1"/>
    <property type="molecule type" value="Genomic_DNA"/>
</dbReference>
<dbReference type="EMBL" id="DP000009">
    <property type="protein sequence ID" value="ABF98484.1"/>
    <property type="molecule type" value="Genomic_DNA"/>
</dbReference>
<dbReference type="EMBL" id="DP000009">
    <property type="protein sequence ID" value="ABF98485.1"/>
    <property type="molecule type" value="Genomic_DNA"/>
</dbReference>
<dbReference type="EMBL" id="DP000009">
    <property type="protein sequence ID" value="ABF98486.1"/>
    <property type="molecule type" value="Genomic_DNA"/>
</dbReference>
<dbReference type="EMBL" id="AP008209">
    <property type="protein sequence ID" value="BAF12952.1"/>
    <property type="molecule type" value="Genomic_DNA"/>
</dbReference>
<dbReference type="EMBL" id="AP014959">
    <property type="protein sequence ID" value="BAS85997.1"/>
    <property type="molecule type" value="Genomic_DNA"/>
</dbReference>
<dbReference type="EMBL" id="CM000140">
    <property type="protein sequence ID" value="EAZ28319.1"/>
    <property type="molecule type" value="Genomic_DNA"/>
</dbReference>
<dbReference type="EMBL" id="AK069199">
    <property type="protein sequence ID" value="BAG91311.1"/>
    <property type="molecule type" value="mRNA"/>
</dbReference>
<dbReference type="RefSeq" id="XP_015631547.1">
    <property type="nucleotide sequence ID" value="XM_015776061.1"/>
</dbReference>
<dbReference type="RefSeq" id="XP_015631548.1">
    <property type="nucleotide sequence ID" value="XM_015776062.1"/>
</dbReference>
<dbReference type="RefSeq" id="XP_015631549.1">
    <property type="nucleotide sequence ID" value="XM_015776063.1"/>
</dbReference>
<dbReference type="SMR" id="Q53RK8"/>
<dbReference type="FunCoup" id="Q53RK8">
    <property type="interactions" value="2691"/>
</dbReference>
<dbReference type="STRING" id="39947.Q53RK8"/>
<dbReference type="PaxDb" id="39947-Q53RK8"/>
<dbReference type="EnsemblPlants" id="Os03t0708600-01">
    <property type="protein sequence ID" value="Os03t0708600-01"/>
    <property type="gene ID" value="Os03g0708600"/>
</dbReference>
<dbReference type="EnsemblPlants" id="Os03t0708600-02">
    <property type="protein sequence ID" value="Os03t0708600-02"/>
    <property type="gene ID" value="Os03g0708600"/>
</dbReference>
<dbReference type="GeneID" id="4333866"/>
<dbReference type="Gramene" id="Os03t0708600-01">
    <property type="protein sequence ID" value="Os03t0708600-01"/>
    <property type="gene ID" value="Os03g0708600"/>
</dbReference>
<dbReference type="Gramene" id="Os03t0708600-02">
    <property type="protein sequence ID" value="Os03t0708600-02"/>
    <property type="gene ID" value="Os03g0708600"/>
</dbReference>
<dbReference type="KEGG" id="dosa:Os03g0708600"/>
<dbReference type="KEGG" id="osa:4333866"/>
<dbReference type="eggNOG" id="KOG0333">
    <property type="taxonomic scope" value="Eukaryota"/>
</dbReference>
<dbReference type="HOGENOM" id="CLU_003041_11_2_1"/>
<dbReference type="InParanoid" id="Q53RK8"/>
<dbReference type="OMA" id="ARDIKHM"/>
<dbReference type="OrthoDB" id="196131at2759"/>
<dbReference type="Proteomes" id="UP000000763">
    <property type="component" value="Chromosome 3"/>
</dbReference>
<dbReference type="Proteomes" id="UP000007752">
    <property type="component" value="Chromosome 3"/>
</dbReference>
<dbReference type="Proteomes" id="UP000059680">
    <property type="component" value="Chromosome 3"/>
</dbReference>
<dbReference type="GO" id="GO:0071013">
    <property type="term" value="C:catalytic step 2 spliceosome"/>
    <property type="evidence" value="ECO:0000318"/>
    <property type="project" value="GO_Central"/>
</dbReference>
<dbReference type="GO" id="GO:0005737">
    <property type="term" value="C:cytoplasm"/>
    <property type="evidence" value="ECO:0007669"/>
    <property type="project" value="UniProtKB-SubCell"/>
</dbReference>
<dbReference type="GO" id="GO:0005524">
    <property type="term" value="F:ATP binding"/>
    <property type="evidence" value="ECO:0007669"/>
    <property type="project" value="UniProtKB-KW"/>
</dbReference>
<dbReference type="GO" id="GO:0016887">
    <property type="term" value="F:ATP hydrolysis activity"/>
    <property type="evidence" value="ECO:0007669"/>
    <property type="project" value="RHEA"/>
</dbReference>
<dbReference type="GO" id="GO:0003729">
    <property type="term" value="F:mRNA binding"/>
    <property type="evidence" value="ECO:0000318"/>
    <property type="project" value="GO_Central"/>
</dbReference>
<dbReference type="GO" id="GO:0003724">
    <property type="term" value="F:RNA helicase activity"/>
    <property type="evidence" value="ECO:0007669"/>
    <property type="project" value="UniProtKB-EC"/>
</dbReference>
<dbReference type="GO" id="GO:0000398">
    <property type="term" value="P:mRNA splicing, via spliceosome"/>
    <property type="evidence" value="ECO:0000318"/>
    <property type="project" value="GO_Central"/>
</dbReference>
<dbReference type="CDD" id="cd17945">
    <property type="entry name" value="DEADc_DDX23"/>
    <property type="match status" value="1"/>
</dbReference>
<dbReference type="CDD" id="cd18787">
    <property type="entry name" value="SF2_C_DEAD"/>
    <property type="match status" value="1"/>
</dbReference>
<dbReference type="FunFam" id="3.40.50.300:FF:000322">
    <property type="entry name" value="probable ATP-dependent RNA helicase DDX23"/>
    <property type="match status" value="1"/>
</dbReference>
<dbReference type="Gene3D" id="3.40.50.300">
    <property type="entry name" value="P-loop containing nucleotide triphosphate hydrolases"/>
    <property type="match status" value="2"/>
</dbReference>
<dbReference type="InterPro" id="IPR011545">
    <property type="entry name" value="DEAD/DEAH_box_helicase_dom"/>
</dbReference>
<dbReference type="InterPro" id="IPR014001">
    <property type="entry name" value="Helicase_ATP-bd"/>
</dbReference>
<dbReference type="InterPro" id="IPR001650">
    <property type="entry name" value="Helicase_C-like"/>
</dbReference>
<dbReference type="InterPro" id="IPR027417">
    <property type="entry name" value="P-loop_NTPase"/>
</dbReference>
<dbReference type="InterPro" id="IPR000629">
    <property type="entry name" value="RNA-helicase_DEAD-box_CS"/>
</dbReference>
<dbReference type="InterPro" id="IPR014014">
    <property type="entry name" value="RNA_helicase_DEAD_Q_motif"/>
</dbReference>
<dbReference type="PANTHER" id="PTHR47958">
    <property type="entry name" value="ATP-DEPENDENT RNA HELICASE DBP3"/>
    <property type="match status" value="1"/>
</dbReference>
<dbReference type="Pfam" id="PF25430">
    <property type="entry name" value="DDX23"/>
    <property type="match status" value="1"/>
</dbReference>
<dbReference type="Pfam" id="PF00270">
    <property type="entry name" value="DEAD"/>
    <property type="match status" value="1"/>
</dbReference>
<dbReference type="Pfam" id="PF00271">
    <property type="entry name" value="Helicase_C"/>
    <property type="match status" value="1"/>
</dbReference>
<dbReference type="SMART" id="SM00487">
    <property type="entry name" value="DEXDc"/>
    <property type="match status" value="1"/>
</dbReference>
<dbReference type="SMART" id="SM00490">
    <property type="entry name" value="HELICc"/>
    <property type="match status" value="1"/>
</dbReference>
<dbReference type="SUPFAM" id="SSF52540">
    <property type="entry name" value="P-loop containing nucleoside triphosphate hydrolases"/>
    <property type="match status" value="1"/>
</dbReference>
<dbReference type="PROSITE" id="PS00039">
    <property type="entry name" value="DEAD_ATP_HELICASE"/>
    <property type="match status" value="1"/>
</dbReference>
<dbReference type="PROSITE" id="PS51192">
    <property type="entry name" value="HELICASE_ATP_BIND_1"/>
    <property type="match status" value="1"/>
</dbReference>
<dbReference type="PROSITE" id="PS51194">
    <property type="entry name" value="HELICASE_CTER"/>
    <property type="match status" value="1"/>
</dbReference>
<dbReference type="PROSITE" id="PS51195">
    <property type="entry name" value="Q_MOTIF"/>
    <property type="match status" value="1"/>
</dbReference>